<evidence type="ECO:0000255" key="1">
    <source>
        <dbReference type="HAMAP-Rule" id="MF_00719"/>
    </source>
</evidence>
<dbReference type="EC" id="2.7.8.26" evidence="1"/>
<dbReference type="EMBL" id="CP001120">
    <property type="protein sequence ID" value="ACF66899.1"/>
    <property type="molecule type" value="Genomic_DNA"/>
</dbReference>
<dbReference type="RefSeq" id="WP_000039997.1">
    <property type="nucleotide sequence ID" value="NC_011083.1"/>
</dbReference>
<dbReference type="KEGG" id="seh:SeHA_C2239"/>
<dbReference type="HOGENOM" id="CLU_057426_3_1_6"/>
<dbReference type="UniPathway" id="UPA00148">
    <property type="reaction ID" value="UER00238"/>
</dbReference>
<dbReference type="Proteomes" id="UP000001866">
    <property type="component" value="Chromosome"/>
</dbReference>
<dbReference type="GO" id="GO:0005886">
    <property type="term" value="C:plasma membrane"/>
    <property type="evidence" value="ECO:0007669"/>
    <property type="project" value="UniProtKB-SubCell"/>
</dbReference>
<dbReference type="GO" id="GO:0051073">
    <property type="term" value="F:adenosylcobinamide-GDP ribazoletransferase activity"/>
    <property type="evidence" value="ECO:0007669"/>
    <property type="project" value="UniProtKB-UniRule"/>
</dbReference>
<dbReference type="GO" id="GO:0008818">
    <property type="term" value="F:cobalamin 5'-phosphate synthase activity"/>
    <property type="evidence" value="ECO:0007669"/>
    <property type="project" value="UniProtKB-UniRule"/>
</dbReference>
<dbReference type="GO" id="GO:0009236">
    <property type="term" value="P:cobalamin biosynthetic process"/>
    <property type="evidence" value="ECO:0007669"/>
    <property type="project" value="UniProtKB-UniRule"/>
</dbReference>
<dbReference type="HAMAP" id="MF_00719">
    <property type="entry name" value="CobS"/>
    <property type="match status" value="1"/>
</dbReference>
<dbReference type="InterPro" id="IPR003805">
    <property type="entry name" value="CobS"/>
</dbReference>
<dbReference type="NCBIfam" id="TIGR00317">
    <property type="entry name" value="cobS"/>
    <property type="match status" value="1"/>
</dbReference>
<dbReference type="PANTHER" id="PTHR34148">
    <property type="entry name" value="ADENOSYLCOBINAMIDE-GDP RIBAZOLETRANSFERASE"/>
    <property type="match status" value="1"/>
</dbReference>
<dbReference type="PANTHER" id="PTHR34148:SF1">
    <property type="entry name" value="ADENOSYLCOBINAMIDE-GDP RIBAZOLETRANSFERASE"/>
    <property type="match status" value="1"/>
</dbReference>
<dbReference type="Pfam" id="PF02654">
    <property type="entry name" value="CobS"/>
    <property type="match status" value="1"/>
</dbReference>
<gene>
    <name evidence="1" type="primary">cobS</name>
    <name type="ordered locus">SeHA_C2239</name>
</gene>
<proteinExistence type="inferred from homology"/>
<organism>
    <name type="scientific">Salmonella heidelberg (strain SL476)</name>
    <dbReference type="NCBI Taxonomy" id="454169"/>
    <lineage>
        <taxon>Bacteria</taxon>
        <taxon>Pseudomonadati</taxon>
        <taxon>Pseudomonadota</taxon>
        <taxon>Gammaproteobacteria</taxon>
        <taxon>Enterobacterales</taxon>
        <taxon>Enterobacteriaceae</taxon>
        <taxon>Salmonella</taxon>
    </lineage>
</organism>
<accession>B4T8W9</accession>
<feature type="chain" id="PRO_1000132599" description="Adenosylcobinamide-GDP ribazoletransferase">
    <location>
        <begin position="1"/>
        <end position="247"/>
    </location>
</feature>
<feature type="transmembrane region" description="Helical" evidence="1">
    <location>
        <begin position="34"/>
        <end position="54"/>
    </location>
</feature>
<feature type="transmembrane region" description="Helical" evidence="1">
    <location>
        <begin position="59"/>
        <end position="79"/>
    </location>
</feature>
<feature type="transmembrane region" description="Helical" evidence="1">
    <location>
        <begin position="113"/>
        <end position="133"/>
    </location>
</feature>
<feature type="transmembrane region" description="Helical" evidence="1">
    <location>
        <begin position="138"/>
        <end position="158"/>
    </location>
</feature>
<feature type="transmembrane region" description="Helical" evidence="1">
    <location>
        <begin position="187"/>
        <end position="207"/>
    </location>
</feature>
<sequence>MSKLFWAMLAFISRLPVPSRWSQGLDFEQYSRGIVMFPFIGLILGGVSGLIFILLQPWCGIPLAALFCILALALLTGGFHLDGLADTCDGIFSARRRERMLEIMRDSRLGTHGGLALIFVLLAKILVVSELALRGTPMLAALAAACAAGRGSAVLLMYRHRYAREEGLGNVFIGKVSGRQTCITLGLAVIVATVLLPGMQGLAAMVVTCAAIFILGQLLKRTLGGQTGDTLGAAIELGELIFLLALL</sequence>
<name>COBS_SALHS</name>
<comment type="function">
    <text evidence="1">Joins adenosylcobinamide-GDP and alpha-ribazole to generate adenosylcobalamin (Ado-cobalamin). Also synthesizes adenosylcobalamin 5'-phosphate from adenosylcobinamide-GDP and alpha-ribazole 5'-phosphate.</text>
</comment>
<comment type="catalytic activity">
    <reaction evidence="1">
        <text>alpha-ribazole + adenosylcob(III)inamide-GDP = adenosylcob(III)alamin + GMP + H(+)</text>
        <dbReference type="Rhea" id="RHEA:16049"/>
        <dbReference type="ChEBI" id="CHEBI:10329"/>
        <dbReference type="ChEBI" id="CHEBI:15378"/>
        <dbReference type="ChEBI" id="CHEBI:18408"/>
        <dbReference type="ChEBI" id="CHEBI:58115"/>
        <dbReference type="ChEBI" id="CHEBI:60487"/>
        <dbReference type="EC" id="2.7.8.26"/>
    </reaction>
</comment>
<comment type="catalytic activity">
    <reaction evidence="1">
        <text>alpha-ribazole 5'-phosphate + adenosylcob(III)inamide-GDP = adenosylcob(III)alamin 5'-phosphate + GMP + H(+)</text>
        <dbReference type="Rhea" id="RHEA:23560"/>
        <dbReference type="ChEBI" id="CHEBI:15378"/>
        <dbReference type="ChEBI" id="CHEBI:57918"/>
        <dbReference type="ChEBI" id="CHEBI:58115"/>
        <dbReference type="ChEBI" id="CHEBI:60487"/>
        <dbReference type="ChEBI" id="CHEBI:60493"/>
        <dbReference type="EC" id="2.7.8.26"/>
    </reaction>
</comment>
<comment type="cofactor">
    <cofactor evidence="1">
        <name>Mg(2+)</name>
        <dbReference type="ChEBI" id="CHEBI:18420"/>
    </cofactor>
</comment>
<comment type="pathway">
    <text evidence="1">Cofactor biosynthesis; adenosylcobalamin biosynthesis; adenosylcobalamin from cob(II)yrinate a,c-diamide: step 7/7.</text>
</comment>
<comment type="subcellular location">
    <subcellularLocation>
        <location evidence="1">Cell inner membrane</location>
        <topology evidence="1">Multi-pass membrane protein</topology>
    </subcellularLocation>
</comment>
<comment type="similarity">
    <text evidence="1">Belongs to the CobS family.</text>
</comment>
<keyword id="KW-0997">Cell inner membrane</keyword>
<keyword id="KW-1003">Cell membrane</keyword>
<keyword id="KW-0169">Cobalamin biosynthesis</keyword>
<keyword id="KW-0460">Magnesium</keyword>
<keyword id="KW-0472">Membrane</keyword>
<keyword id="KW-0808">Transferase</keyword>
<keyword id="KW-0812">Transmembrane</keyword>
<keyword id="KW-1133">Transmembrane helix</keyword>
<reference key="1">
    <citation type="journal article" date="2011" name="J. Bacteriol.">
        <title>Comparative genomics of 28 Salmonella enterica isolates: evidence for CRISPR-mediated adaptive sublineage evolution.</title>
        <authorList>
            <person name="Fricke W.F."/>
            <person name="Mammel M.K."/>
            <person name="McDermott P.F."/>
            <person name="Tartera C."/>
            <person name="White D.G."/>
            <person name="Leclerc J.E."/>
            <person name="Ravel J."/>
            <person name="Cebula T.A."/>
        </authorList>
    </citation>
    <scope>NUCLEOTIDE SEQUENCE [LARGE SCALE GENOMIC DNA]</scope>
    <source>
        <strain>SL476</strain>
    </source>
</reference>
<protein>
    <recommendedName>
        <fullName evidence="1">Adenosylcobinamide-GDP ribazoletransferase</fullName>
        <ecNumber evidence="1">2.7.8.26</ecNumber>
    </recommendedName>
    <alternativeName>
        <fullName evidence="1">Cobalamin synthase</fullName>
    </alternativeName>
    <alternativeName>
        <fullName evidence="1">Cobalamin-5'-phosphate synthase</fullName>
    </alternativeName>
</protein>